<reference key="1">
    <citation type="journal article" date="2002" name="DNA Res.">
        <title>Complete genome structure of the thermophilic cyanobacterium Thermosynechococcus elongatus BP-1.</title>
        <authorList>
            <person name="Nakamura Y."/>
            <person name="Kaneko T."/>
            <person name="Sato S."/>
            <person name="Ikeuchi M."/>
            <person name="Katoh H."/>
            <person name="Sasamoto S."/>
            <person name="Watanabe A."/>
            <person name="Iriguchi M."/>
            <person name="Kawashima K."/>
            <person name="Kimura T."/>
            <person name="Kishida Y."/>
            <person name="Kiyokawa C."/>
            <person name="Kohara M."/>
            <person name="Matsumoto M."/>
            <person name="Matsuno A."/>
            <person name="Nakazaki N."/>
            <person name="Shimpo S."/>
            <person name="Sugimoto M."/>
            <person name="Takeuchi C."/>
            <person name="Yamada M."/>
            <person name="Tabata S."/>
        </authorList>
    </citation>
    <scope>NUCLEOTIDE SEQUENCE [LARGE SCALE GENOMIC DNA]</scope>
    <source>
        <strain>NIES-2133 / IAM M-273 / BP-1</strain>
    </source>
</reference>
<name>MURD_THEVB</name>
<feature type="chain" id="PRO_0000109108" description="UDP-N-acetylmuramoylalanine--D-glutamate ligase">
    <location>
        <begin position="1"/>
        <end position="454"/>
    </location>
</feature>
<feature type="binding site" evidence="1">
    <location>
        <begin position="118"/>
        <end position="124"/>
    </location>
    <ligand>
        <name>ATP</name>
        <dbReference type="ChEBI" id="CHEBI:30616"/>
    </ligand>
</feature>
<comment type="function">
    <text evidence="1">Cell wall formation. Catalyzes the addition of glutamate to the nucleotide precursor UDP-N-acetylmuramoyl-L-alanine (UMA).</text>
</comment>
<comment type="catalytic activity">
    <reaction evidence="1">
        <text>UDP-N-acetyl-alpha-D-muramoyl-L-alanine + D-glutamate + ATP = UDP-N-acetyl-alpha-D-muramoyl-L-alanyl-D-glutamate + ADP + phosphate + H(+)</text>
        <dbReference type="Rhea" id="RHEA:16429"/>
        <dbReference type="ChEBI" id="CHEBI:15378"/>
        <dbReference type="ChEBI" id="CHEBI:29986"/>
        <dbReference type="ChEBI" id="CHEBI:30616"/>
        <dbReference type="ChEBI" id="CHEBI:43474"/>
        <dbReference type="ChEBI" id="CHEBI:83898"/>
        <dbReference type="ChEBI" id="CHEBI:83900"/>
        <dbReference type="ChEBI" id="CHEBI:456216"/>
        <dbReference type="EC" id="6.3.2.9"/>
    </reaction>
</comment>
<comment type="pathway">
    <text evidence="1">Cell wall biogenesis; peptidoglycan biosynthesis.</text>
</comment>
<comment type="subcellular location">
    <subcellularLocation>
        <location evidence="1">Cytoplasm</location>
    </subcellularLocation>
</comment>
<comment type="similarity">
    <text evidence="1">Belongs to the MurCDEF family.</text>
</comment>
<sequence>MPTVHVIGLGRSGIAAARLLKRQGWQVEVSDRRQTPALQSQQQLLQAEGIPVQLNYDFDLQTLISVGLRVPDEIVISPGVPWHSPALVAARQAGIPVRGEVAIAWQTLAHLPWVCITGTNGKTTTTALTAAIFQAAGYNAPACGNIGNSICEVALTARALDWVIAEISSYQLESSPPLQPEFALWTTLTPDHLERHGTLDAYVATKAHLMNGAKHVILNGDDPYLRQHMVNRWPQAWWISTQGAIALPKGIAQGIYIAEDQVWFQDQPLLPTHILQMPGRHNQQNFLLAVATAHLAGIPAETIAKGVAGFAGVPHRLERIRQWREVEWINDSKATNYDAAEIGLRSVTGPVILIAGGQAKKGDDRPWLNLIQEKAAWVLLIGEAAPQFAQRLEAIGFTNYEIMETLDRAVAAAAELVTQYPIKTVLFSPGCASFDQYQNFEERGDHFRQLCLEL</sequence>
<gene>
    <name evidence="1" type="primary">murD</name>
    <name type="ordered locus">tll0073</name>
</gene>
<organism>
    <name type="scientific">Thermosynechococcus vestitus (strain NIES-2133 / IAM M-273 / BP-1)</name>
    <dbReference type="NCBI Taxonomy" id="197221"/>
    <lineage>
        <taxon>Bacteria</taxon>
        <taxon>Bacillati</taxon>
        <taxon>Cyanobacteriota</taxon>
        <taxon>Cyanophyceae</taxon>
        <taxon>Acaryochloridales</taxon>
        <taxon>Thermosynechococcaceae</taxon>
        <taxon>Thermosynechococcus</taxon>
    </lineage>
</organism>
<proteinExistence type="inferred from homology"/>
<keyword id="KW-0067">ATP-binding</keyword>
<keyword id="KW-0131">Cell cycle</keyword>
<keyword id="KW-0132">Cell division</keyword>
<keyword id="KW-0133">Cell shape</keyword>
<keyword id="KW-0961">Cell wall biogenesis/degradation</keyword>
<keyword id="KW-0963">Cytoplasm</keyword>
<keyword id="KW-0436">Ligase</keyword>
<keyword id="KW-0547">Nucleotide-binding</keyword>
<keyword id="KW-0573">Peptidoglycan synthesis</keyword>
<keyword id="KW-1185">Reference proteome</keyword>
<dbReference type="EC" id="6.3.2.9" evidence="1"/>
<dbReference type="EMBL" id="BA000039">
    <property type="protein sequence ID" value="BAC07626.1"/>
    <property type="molecule type" value="Genomic_DNA"/>
</dbReference>
<dbReference type="RefSeq" id="NP_680864.1">
    <property type="nucleotide sequence ID" value="NC_004113.1"/>
</dbReference>
<dbReference type="RefSeq" id="WP_011055928.1">
    <property type="nucleotide sequence ID" value="NC_004113.1"/>
</dbReference>
<dbReference type="SMR" id="Q8DMN8"/>
<dbReference type="STRING" id="197221.gene:10746651"/>
<dbReference type="EnsemblBacteria" id="BAC07626">
    <property type="protein sequence ID" value="BAC07626"/>
    <property type="gene ID" value="BAC07626"/>
</dbReference>
<dbReference type="KEGG" id="tel:tll0073"/>
<dbReference type="PATRIC" id="fig|197221.4.peg.75"/>
<dbReference type="eggNOG" id="COG0771">
    <property type="taxonomic scope" value="Bacteria"/>
</dbReference>
<dbReference type="UniPathway" id="UPA00219"/>
<dbReference type="Proteomes" id="UP000000440">
    <property type="component" value="Chromosome"/>
</dbReference>
<dbReference type="GO" id="GO:0005737">
    <property type="term" value="C:cytoplasm"/>
    <property type="evidence" value="ECO:0007669"/>
    <property type="project" value="UniProtKB-SubCell"/>
</dbReference>
<dbReference type="GO" id="GO:0005524">
    <property type="term" value="F:ATP binding"/>
    <property type="evidence" value="ECO:0007669"/>
    <property type="project" value="UniProtKB-UniRule"/>
</dbReference>
<dbReference type="GO" id="GO:0008764">
    <property type="term" value="F:UDP-N-acetylmuramoylalanine-D-glutamate ligase activity"/>
    <property type="evidence" value="ECO:0007669"/>
    <property type="project" value="UniProtKB-UniRule"/>
</dbReference>
<dbReference type="GO" id="GO:0051301">
    <property type="term" value="P:cell division"/>
    <property type="evidence" value="ECO:0007669"/>
    <property type="project" value="UniProtKB-KW"/>
</dbReference>
<dbReference type="GO" id="GO:0071555">
    <property type="term" value="P:cell wall organization"/>
    <property type="evidence" value="ECO:0007669"/>
    <property type="project" value="UniProtKB-KW"/>
</dbReference>
<dbReference type="GO" id="GO:0009252">
    <property type="term" value="P:peptidoglycan biosynthetic process"/>
    <property type="evidence" value="ECO:0007669"/>
    <property type="project" value="UniProtKB-UniRule"/>
</dbReference>
<dbReference type="GO" id="GO:0008360">
    <property type="term" value="P:regulation of cell shape"/>
    <property type="evidence" value="ECO:0007669"/>
    <property type="project" value="UniProtKB-KW"/>
</dbReference>
<dbReference type="Gene3D" id="3.90.190.20">
    <property type="entry name" value="Mur ligase, C-terminal domain"/>
    <property type="match status" value="1"/>
</dbReference>
<dbReference type="Gene3D" id="3.40.1190.10">
    <property type="entry name" value="Mur-like, catalytic domain"/>
    <property type="match status" value="1"/>
</dbReference>
<dbReference type="Gene3D" id="3.40.50.720">
    <property type="entry name" value="NAD(P)-binding Rossmann-like Domain"/>
    <property type="match status" value="1"/>
</dbReference>
<dbReference type="HAMAP" id="MF_00639">
    <property type="entry name" value="MurD"/>
    <property type="match status" value="1"/>
</dbReference>
<dbReference type="InterPro" id="IPR036565">
    <property type="entry name" value="Mur-like_cat_sf"/>
</dbReference>
<dbReference type="InterPro" id="IPR036615">
    <property type="entry name" value="Mur_ligase_C_dom_sf"/>
</dbReference>
<dbReference type="InterPro" id="IPR013221">
    <property type="entry name" value="Mur_ligase_cen"/>
</dbReference>
<dbReference type="InterPro" id="IPR005762">
    <property type="entry name" value="MurD"/>
</dbReference>
<dbReference type="NCBIfam" id="TIGR01087">
    <property type="entry name" value="murD"/>
    <property type="match status" value="1"/>
</dbReference>
<dbReference type="PANTHER" id="PTHR43692">
    <property type="entry name" value="UDP-N-ACETYLMURAMOYLALANINE--D-GLUTAMATE LIGASE"/>
    <property type="match status" value="1"/>
</dbReference>
<dbReference type="PANTHER" id="PTHR43692:SF1">
    <property type="entry name" value="UDP-N-ACETYLMURAMOYLALANINE--D-GLUTAMATE LIGASE"/>
    <property type="match status" value="1"/>
</dbReference>
<dbReference type="Pfam" id="PF08245">
    <property type="entry name" value="Mur_ligase_M"/>
    <property type="match status" value="1"/>
</dbReference>
<dbReference type="Pfam" id="PF21799">
    <property type="entry name" value="MurD-like_N"/>
    <property type="match status" value="1"/>
</dbReference>
<dbReference type="SUPFAM" id="SSF51984">
    <property type="entry name" value="MurCD N-terminal domain"/>
    <property type="match status" value="1"/>
</dbReference>
<dbReference type="SUPFAM" id="SSF53623">
    <property type="entry name" value="MurD-like peptide ligases, catalytic domain"/>
    <property type="match status" value="1"/>
</dbReference>
<dbReference type="SUPFAM" id="SSF53244">
    <property type="entry name" value="MurD-like peptide ligases, peptide-binding domain"/>
    <property type="match status" value="1"/>
</dbReference>
<evidence type="ECO:0000255" key="1">
    <source>
        <dbReference type="HAMAP-Rule" id="MF_00639"/>
    </source>
</evidence>
<protein>
    <recommendedName>
        <fullName evidence="1">UDP-N-acetylmuramoylalanine--D-glutamate ligase</fullName>
        <ecNumber evidence="1">6.3.2.9</ecNumber>
    </recommendedName>
    <alternativeName>
        <fullName evidence="1">D-glutamic acid-adding enzyme</fullName>
    </alternativeName>
    <alternativeName>
        <fullName evidence="1">UDP-N-acetylmuramoyl-L-alanyl-D-glutamate synthetase</fullName>
    </alternativeName>
</protein>
<accession>Q8DMN8</accession>